<reference key="1">
    <citation type="journal article" date="2001" name="Lancet">
        <title>Whole genome sequencing of meticillin-resistant Staphylococcus aureus.</title>
        <authorList>
            <person name="Kuroda M."/>
            <person name="Ohta T."/>
            <person name="Uchiyama I."/>
            <person name="Baba T."/>
            <person name="Yuzawa H."/>
            <person name="Kobayashi I."/>
            <person name="Cui L."/>
            <person name="Oguchi A."/>
            <person name="Aoki K."/>
            <person name="Nagai Y."/>
            <person name="Lian J.-Q."/>
            <person name="Ito T."/>
            <person name="Kanamori M."/>
            <person name="Matsumaru H."/>
            <person name="Maruyama A."/>
            <person name="Murakami H."/>
            <person name="Hosoyama A."/>
            <person name="Mizutani-Ui Y."/>
            <person name="Takahashi N.K."/>
            <person name="Sawano T."/>
            <person name="Inoue R."/>
            <person name="Kaito C."/>
            <person name="Sekimizu K."/>
            <person name="Hirakawa H."/>
            <person name="Kuhara S."/>
            <person name="Goto S."/>
            <person name="Yabuzaki J."/>
            <person name="Kanehisa M."/>
            <person name="Yamashita A."/>
            <person name="Oshima K."/>
            <person name="Furuya K."/>
            <person name="Yoshino C."/>
            <person name="Shiba T."/>
            <person name="Hattori M."/>
            <person name="Ogasawara N."/>
            <person name="Hayashi H."/>
            <person name="Hiramatsu K."/>
        </authorList>
    </citation>
    <scope>NUCLEOTIDE SEQUENCE [LARGE SCALE GENOMIC DNA]</scope>
    <source>
        <strain>Mu50 / ATCC 700699</strain>
    </source>
</reference>
<gene>
    <name type="primary">hisF</name>
    <name type="ordered locus">SAV2673</name>
</gene>
<comment type="function">
    <text evidence="1">IGPS catalyzes the conversion of PRFAR and glutamine to IGP, AICAR and glutamate. The HisF subunit catalyzes the cyclization activity that produces IGP and AICAR from PRFAR using the ammonia provided by the HisH subunit (By similarity).</text>
</comment>
<comment type="catalytic activity">
    <reaction>
        <text>5-[(5-phospho-1-deoxy-D-ribulos-1-ylimino)methylamino]-1-(5-phospho-beta-D-ribosyl)imidazole-4-carboxamide + L-glutamine = D-erythro-1-(imidazol-4-yl)glycerol 3-phosphate + 5-amino-1-(5-phospho-beta-D-ribosyl)imidazole-4-carboxamide + L-glutamate + H(+)</text>
        <dbReference type="Rhea" id="RHEA:24793"/>
        <dbReference type="ChEBI" id="CHEBI:15378"/>
        <dbReference type="ChEBI" id="CHEBI:29985"/>
        <dbReference type="ChEBI" id="CHEBI:58278"/>
        <dbReference type="ChEBI" id="CHEBI:58359"/>
        <dbReference type="ChEBI" id="CHEBI:58475"/>
        <dbReference type="ChEBI" id="CHEBI:58525"/>
        <dbReference type="EC" id="4.3.2.10"/>
    </reaction>
</comment>
<comment type="pathway">
    <text>Amino-acid biosynthesis; L-histidine biosynthesis; L-histidine from 5-phospho-alpha-D-ribose 1-diphosphate: step 5/9.</text>
</comment>
<comment type="subunit">
    <text evidence="1">Heterodimer of HisH and HisF.</text>
</comment>
<comment type="subcellular location">
    <subcellularLocation>
        <location evidence="1">Cytoplasm</location>
    </subcellularLocation>
</comment>
<comment type="similarity">
    <text evidence="3">Belongs to the HisA/HisF family.</text>
</comment>
<dbReference type="EC" id="4.3.2.10"/>
<dbReference type="EMBL" id="BA000017">
    <property type="protein sequence ID" value="BAB58835.1"/>
    <property type="molecule type" value="Genomic_DNA"/>
</dbReference>
<dbReference type="SMR" id="P64361"/>
<dbReference type="KEGG" id="sav:SAV2673"/>
<dbReference type="HOGENOM" id="CLU_048577_4_0_9"/>
<dbReference type="PhylomeDB" id="P64361"/>
<dbReference type="UniPathway" id="UPA00031">
    <property type="reaction ID" value="UER00010"/>
</dbReference>
<dbReference type="Proteomes" id="UP000002481">
    <property type="component" value="Chromosome"/>
</dbReference>
<dbReference type="GO" id="GO:0005737">
    <property type="term" value="C:cytoplasm"/>
    <property type="evidence" value="ECO:0007669"/>
    <property type="project" value="UniProtKB-SubCell"/>
</dbReference>
<dbReference type="GO" id="GO:0000107">
    <property type="term" value="F:imidazoleglycerol-phosphate synthase activity"/>
    <property type="evidence" value="ECO:0007669"/>
    <property type="project" value="UniProtKB-UniRule"/>
</dbReference>
<dbReference type="GO" id="GO:0016829">
    <property type="term" value="F:lyase activity"/>
    <property type="evidence" value="ECO:0007669"/>
    <property type="project" value="UniProtKB-KW"/>
</dbReference>
<dbReference type="GO" id="GO:0000105">
    <property type="term" value="P:L-histidine biosynthetic process"/>
    <property type="evidence" value="ECO:0007669"/>
    <property type="project" value="UniProtKB-UniRule"/>
</dbReference>
<dbReference type="CDD" id="cd04731">
    <property type="entry name" value="HisF"/>
    <property type="match status" value="1"/>
</dbReference>
<dbReference type="FunFam" id="3.20.20.70:FF:000462">
    <property type="entry name" value="Multifunctional fusion protein"/>
    <property type="match status" value="1"/>
</dbReference>
<dbReference type="Gene3D" id="3.20.20.70">
    <property type="entry name" value="Aldolase class I"/>
    <property type="match status" value="1"/>
</dbReference>
<dbReference type="HAMAP" id="MF_01013">
    <property type="entry name" value="HisF"/>
    <property type="match status" value="1"/>
</dbReference>
<dbReference type="InterPro" id="IPR013785">
    <property type="entry name" value="Aldolase_TIM"/>
</dbReference>
<dbReference type="InterPro" id="IPR006062">
    <property type="entry name" value="His_biosynth"/>
</dbReference>
<dbReference type="InterPro" id="IPR004651">
    <property type="entry name" value="HisF"/>
</dbReference>
<dbReference type="InterPro" id="IPR050064">
    <property type="entry name" value="IGPS_HisA/HisF"/>
</dbReference>
<dbReference type="InterPro" id="IPR011060">
    <property type="entry name" value="RibuloseP-bd_barrel"/>
</dbReference>
<dbReference type="NCBIfam" id="TIGR00735">
    <property type="entry name" value="hisF"/>
    <property type="match status" value="1"/>
</dbReference>
<dbReference type="PANTHER" id="PTHR21235:SF2">
    <property type="entry name" value="IMIDAZOLE GLYCEROL PHOSPHATE SYNTHASE HISHF"/>
    <property type="match status" value="1"/>
</dbReference>
<dbReference type="PANTHER" id="PTHR21235">
    <property type="entry name" value="IMIDAZOLE GLYCEROL PHOSPHATE SYNTHASE SUBUNIT HISF/H IGP SYNTHASE SUBUNIT HISF/H"/>
    <property type="match status" value="1"/>
</dbReference>
<dbReference type="Pfam" id="PF00977">
    <property type="entry name" value="His_biosynth"/>
    <property type="match status" value="1"/>
</dbReference>
<dbReference type="SUPFAM" id="SSF51366">
    <property type="entry name" value="Ribulose-phoshate binding barrel"/>
    <property type="match status" value="1"/>
</dbReference>
<feature type="chain" id="PRO_0000142235" description="Imidazole glycerol phosphate synthase subunit HisF">
    <location>
        <begin position="1"/>
        <end position="252"/>
    </location>
</feature>
<feature type="active site" evidence="2">
    <location>
        <position position="11"/>
    </location>
</feature>
<feature type="active site" evidence="2">
    <location>
        <position position="130"/>
    </location>
</feature>
<organism>
    <name type="scientific">Staphylococcus aureus (strain Mu50 / ATCC 700699)</name>
    <dbReference type="NCBI Taxonomy" id="158878"/>
    <lineage>
        <taxon>Bacteria</taxon>
        <taxon>Bacillati</taxon>
        <taxon>Bacillota</taxon>
        <taxon>Bacilli</taxon>
        <taxon>Bacillales</taxon>
        <taxon>Staphylococcaceae</taxon>
        <taxon>Staphylococcus</taxon>
    </lineage>
</organism>
<accession>P64361</accession>
<accession>Q99QW8</accession>
<proteinExistence type="inferred from homology"/>
<sequence>MIKKRIIPCLDVKDGRVVKGIQFKGLRDIGNPVDLAIYYNEAGADELVFLDISKTEEGHSLMLEVIEQTASRLFIPLTVGGGIQSLDDITQLLNHGADKVSLNSSALKNPQLIKQASDKFGRQCICIAIDSYYDPERKAHYCCTHGGKKMTNIKVYDWVQQVEQLGAGELLVTSMGHDGMKQGFDIEHLAKIKSLVNIPIIASGGGGNAQHFVELFNQTDVSAGLAASILHDRETTVQSIKEVIRQGGIAVR</sequence>
<protein>
    <recommendedName>
        <fullName>Imidazole glycerol phosphate synthase subunit HisF</fullName>
        <ecNumber>4.3.2.10</ecNumber>
    </recommendedName>
    <alternativeName>
        <fullName>IGP synthase cyclase subunit</fullName>
    </alternativeName>
    <alternativeName>
        <fullName>IGP synthase subunit HisF</fullName>
    </alternativeName>
    <alternativeName>
        <fullName>ImGP synthase subunit HisF</fullName>
        <shortName>IGPS subunit HisF</shortName>
    </alternativeName>
</protein>
<evidence type="ECO:0000250" key="1"/>
<evidence type="ECO:0000255" key="2"/>
<evidence type="ECO:0000305" key="3"/>
<keyword id="KW-0028">Amino-acid biosynthesis</keyword>
<keyword id="KW-0963">Cytoplasm</keyword>
<keyword id="KW-0368">Histidine biosynthesis</keyword>
<keyword id="KW-0456">Lyase</keyword>
<name>HIS6_STAAM</name>